<proteinExistence type="inferred from homology"/>
<protein>
    <recommendedName>
        <fullName evidence="1">Transcriptional regulator SlyA</fullName>
    </recommendedName>
</protein>
<dbReference type="EMBL" id="CP001600">
    <property type="protein sequence ID" value="ACR69277.1"/>
    <property type="molecule type" value="Genomic_DNA"/>
</dbReference>
<dbReference type="RefSeq" id="WP_015871408.1">
    <property type="nucleotide sequence ID" value="NZ_CP169062.1"/>
</dbReference>
<dbReference type="SMR" id="C5BE36"/>
<dbReference type="STRING" id="67780.B6E78_03115"/>
<dbReference type="GeneID" id="69539030"/>
<dbReference type="KEGG" id="eic:NT01EI_2101"/>
<dbReference type="PATRIC" id="fig|634503.3.peg.1878"/>
<dbReference type="HOGENOM" id="CLU_083287_18_2_6"/>
<dbReference type="OrthoDB" id="5296557at2"/>
<dbReference type="Proteomes" id="UP000001485">
    <property type="component" value="Chromosome"/>
</dbReference>
<dbReference type="GO" id="GO:0003677">
    <property type="term" value="F:DNA binding"/>
    <property type="evidence" value="ECO:0007669"/>
    <property type="project" value="UniProtKB-UniRule"/>
</dbReference>
<dbReference type="GO" id="GO:0003700">
    <property type="term" value="F:DNA-binding transcription factor activity"/>
    <property type="evidence" value="ECO:0007669"/>
    <property type="project" value="UniProtKB-UniRule"/>
</dbReference>
<dbReference type="GO" id="GO:0006950">
    <property type="term" value="P:response to stress"/>
    <property type="evidence" value="ECO:0007669"/>
    <property type="project" value="TreeGrafter"/>
</dbReference>
<dbReference type="FunFam" id="1.10.10.10:FF:000261">
    <property type="entry name" value="Transcriptional regulator SlyA"/>
    <property type="match status" value="1"/>
</dbReference>
<dbReference type="Gene3D" id="1.10.10.10">
    <property type="entry name" value="Winged helix-like DNA-binding domain superfamily/Winged helix DNA-binding domain"/>
    <property type="match status" value="1"/>
</dbReference>
<dbReference type="HAMAP" id="MF_01819">
    <property type="entry name" value="HTH_type_SlyA"/>
    <property type="match status" value="1"/>
</dbReference>
<dbReference type="InterPro" id="IPR000835">
    <property type="entry name" value="HTH_MarR-typ"/>
</dbReference>
<dbReference type="InterPro" id="IPR039422">
    <property type="entry name" value="MarR/SlyA-like"/>
</dbReference>
<dbReference type="InterPro" id="IPR023187">
    <property type="entry name" value="Tscrpt_reg_MarR-type_CS"/>
</dbReference>
<dbReference type="InterPro" id="IPR023071">
    <property type="entry name" value="Tscrpt_reg_SlyA"/>
</dbReference>
<dbReference type="InterPro" id="IPR036388">
    <property type="entry name" value="WH-like_DNA-bd_sf"/>
</dbReference>
<dbReference type="InterPro" id="IPR036390">
    <property type="entry name" value="WH_DNA-bd_sf"/>
</dbReference>
<dbReference type="NCBIfam" id="NF002926">
    <property type="entry name" value="PRK03573.1"/>
    <property type="match status" value="1"/>
</dbReference>
<dbReference type="PANTHER" id="PTHR33164:SF64">
    <property type="entry name" value="TRANSCRIPTIONAL REGULATOR SLYA"/>
    <property type="match status" value="1"/>
</dbReference>
<dbReference type="PANTHER" id="PTHR33164">
    <property type="entry name" value="TRANSCRIPTIONAL REGULATOR, MARR FAMILY"/>
    <property type="match status" value="1"/>
</dbReference>
<dbReference type="Pfam" id="PF01047">
    <property type="entry name" value="MarR"/>
    <property type="match status" value="1"/>
</dbReference>
<dbReference type="PRINTS" id="PR00598">
    <property type="entry name" value="HTHMARR"/>
</dbReference>
<dbReference type="SMART" id="SM00347">
    <property type="entry name" value="HTH_MARR"/>
    <property type="match status" value="1"/>
</dbReference>
<dbReference type="SUPFAM" id="SSF46785">
    <property type="entry name" value="Winged helix' DNA-binding domain"/>
    <property type="match status" value="1"/>
</dbReference>
<dbReference type="PROSITE" id="PS01117">
    <property type="entry name" value="HTH_MARR_1"/>
    <property type="match status" value="1"/>
</dbReference>
<dbReference type="PROSITE" id="PS50995">
    <property type="entry name" value="HTH_MARR_2"/>
    <property type="match status" value="1"/>
</dbReference>
<evidence type="ECO:0000255" key="1">
    <source>
        <dbReference type="HAMAP-Rule" id="MF_01819"/>
    </source>
</evidence>
<feature type="chain" id="PRO_1000216023" description="Transcriptional regulator SlyA">
    <location>
        <begin position="1"/>
        <end position="143"/>
    </location>
</feature>
<feature type="domain" description="HTH marR-type" evidence="1">
    <location>
        <begin position="2"/>
        <end position="135"/>
    </location>
</feature>
<feature type="DNA-binding region" description="H-T-H motif" evidence="1">
    <location>
        <begin position="49"/>
        <end position="72"/>
    </location>
</feature>
<accession>C5BE36</accession>
<name>SLYA_EDWI9</name>
<keyword id="KW-0010">Activator</keyword>
<keyword id="KW-0238">DNA-binding</keyword>
<keyword id="KW-0678">Repressor</keyword>
<keyword id="KW-0804">Transcription</keyword>
<keyword id="KW-0805">Transcription regulation</keyword>
<comment type="function">
    <text evidence="1">Transcription regulator that can specifically activate or repress expression of target genes.</text>
</comment>
<comment type="subunit">
    <text evidence="1">Homodimer.</text>
</comment>
<comment type="similarity">
    <text evidence="1">Belongs to the SlyA family.</text>
</comment>
<sequence>MESTLGSDLARLVRVWRALIDQRLKPLELTQTHWVTLYNIHRLPPEQSQIQLAKAIGIEQPSLVRTLDQLEDKGLITRHTCANDRRAKRIKLTDGAEPVIREVADVISLTRCEILDGISADEVSLLANLIERLEQNIIHLQNK</sequence>
<gene>
    <name evidence="1" type="primary">slyA</name>
    <name type="ordered locus">NT01EI_2101</name>
</gene>
<organism>
    <name type="scientific">Edwardsiella ictaluri (strain 93-146)</name>
    <dbReference type="NCBI Taxonomy" id="634503"/>
    <lineage>
        <taxon>Bacteria</taxon>
        <taxon>Pseudomonadati</taxon>
        <taxon>Pseudomonadota</taxon>
        <taxon>Gammaproteobacteria</taxon>
        <taxon>Enterobacterales</taxon>
        <taxon>Hafniaceae</taxon>
        <taxon>Edwardsiella</taxon>
    </lineage>
</organism>
<reference key="1">
    <citation type="submission" date="2009-03" db="EMBL/GenBank/DDBJ databases">
        <title>Complete genome sequence of Edwardsiella ictaluri 93-146.</title>
        <authorList>
            <person name="Williams M.L."/>
            <person name="Gillaspy A.F."/>
            <person name="Dyer D.W."/>
            <person name="Thune R.L."/>
            <person name="Waldbieser G.C."/>
            <person name="Schuster S.C."/>
            <person name="Gipson J."/>
            <person name="Zaitshik J."/>
            <person name="Landry C."/>
            <person name="Lawrence M.L."/>
        </authorList>
    </citation>
    <scope>NUCLEOTIDE SEQUENCE [LARGE SCALE GENOMIC DNA]</scope>
    <source>
        <strain>93-146</strain>
    </source>
</reference>